<sequence>MADDLRAGGVLEPIAMVPPRPDLAAEKEPASWKEGLFLDADPCSDQGYHANPGATVKTLIPEGKTPFPRIIQTNELLFYERFRAYQDYILADCKASEVKEFTVSFLEKVLEPSGWWAVWHTNVFEVLVEVTNVDFPSLKAVVRLAEPCIYESKLSTFTLANVKELLDLKEFHLPLQELWVVSDDSHEFHQMALAIEHVRFFYKHIWRSWDEEEEDEYDYFVRCVEPRLRLYYDILEDRVPSGLIVDYHNLLSQCEESYRKFLNLRSSLSNCNSDSEQENISMVEGLNLYSEIEQLKQKLKLIENPLLRYVFGYQKNSNIQGKGTRQNGQKVIHVVSSTMKTGLLRSLFKDRFCEESCKEETEIKFHSDLLSGINACYDGDTVIICPGHYVVHGTCSIADSIELEGYGLPDDIVIEKRGKGDTFVDCTGMDVKISGIKFIQHDSVEGILIIHHGKTTLENCVLQCETTGVTVRTSAELFMKNSDVYGAKGAGIEIYPGSKCTLTDNGIHHCKEGILIKDFLDEHYDIPKISMINNVIHNNEGYGVVLVKPTIFCDLQENTQDEINDNMVQKNKEADVTEGLDLEEMLQCVASKMEPYATADFNEQAKGNCEIINELLAISMQKGRMKKRLSELGITQADDNIMSQEMFIEIMGNQFKWNGKGSFGTFLY</sequence>
<comment type="function">
    <text evidence="2 3">May play a role in signaling pathways governing cellular proliferation, cell growth and differentiation. May be a component of a novel signaling pathway downstream of Shc. Acts as a positive regulator of FGF signaling in neural progenitor cells.</text>
</comment>
<comment type="subunit">
    <text evidence="1 2 3">Interacts directly with isoform p52shc of SHC1 via its SH2 domain (PubMed:10086341). Interacts with TRIM71; leading to enhanced SHCBP1 protein stability (PubMed:22508726). Interacts with both members of the centralspindlin complex, KIF23 and RACGAP1 (By similarity).</text>
</comment>
<comment type="interaction">
    <interactant intactId="EBI-644352">
        <id>Q9Z179</id>
    </interactant>
    <interactant intactId="EBI-300201">
        <id>P98083</id>
        <label>Shc1</label>
    </interactant>
    <organismsDiffer>false</organismsDiffer>
    <experiments>5</experiments>
</comment>
<comment type="subcellular location">
    <subcellularLocation>
        <location evidence="1">Midbody</location>
    </subcellularLocation>
    <subcellularLocation>
        <location evidence="1">Cytoplasm</location>
        <location evidence="1">Cytoskeleton</location>
        <location evidence="1">Spindle</location>
    </subcellularLocation>
    <text evidence="1">Displays weak localization to the spindle midzone in some early telophase cells and is concentrated at the midbody in late cytokinesis.</text>
</comment>
<comment type="tissue specificity">
    <text evidence="2">Expressed in spleen, lung and heart with higher expression in testis. No expression in brain, liver and skeletal muscle. Elevated expression in actively cycling cells.</text>
</comment>
<comment type="induction">
    <text evidence="2">Down-regulated upon growth inhibition.</text>
</comment>
<name>SHCBP_MOUSE</name>
<protein>
    <recommendedName>
        <fullName>SHC SH2 domain-binding protein 1</fullName>
    </recommendedName>
    <alternativeName>
        <fullName>Protein expressed in activated lymphocytes</fullName>
        <shortName>mPAL</shortName>
    </alternativeName>
    <alternativeName>
        <fullName>SHC-binding protein</fullName>
    </alternativeName>
</protein>
<evidence type="ECO:0000250" key="1">
    <source>
        <dbReference type="UniProtKB" id="Q8NEM2"/>
    </source>
</evidence>
<evidence type="ECO:0000269" key="2">
    <source>
    </source>
</evidence>
<evidence type="ECO:0000269" key="3">
    <source>
    </source>
</evidence>
<evidence type="ECO:0000305" key="4"/>
<proteinExistence type="evidence at protein level"/>
<organism>
    <name type="scientific">Mus musculus</name>
    <name type="common">Mouse</name>
    <dbReference type="NCBI Taxonomy" id="10090"/>
    <lineage>
        <taxon>Eukaryota</taxon>
        <taxon>Metazoa</taxon>
        <taxon>Chordata</taxon>
        <taxon>Craniata</taxon>
        <taxon>Vertebrata</taxon>
        <taxon>Euteleostomi</taxon>
        <taxon>Mammalia</taxon>
        <taxon>Eutheria</taxon>
        <taxon>Euarchontoglires</taxon>
        <taxon>Glires</taxon>
        <taxon>Rodentia</taxon>
        <taxon>Myomorpha</taxon>
        <taxon>Muroidea</taxon>
        <taxon>Muridae</taxon>
        <taxon>Murinae</taxon>
        <taxon>Mus</taxon>
        <taxon>Mus</taxon>
    </lineage>
</organism>
<gene>
    <name type="primary">Shcbp1</name>
    <name type="synonym">Pal</name>
</gene>
<accession>Q9Z179</accession>
<accession>Q3UED9</accession>
<accession>Q3UMD9</accession>
<dbReference type="EMBL" id="AF017152">
    <property type="protein sequence ID" value="AAD01613.1"/>
    <property type="molecule type" value="mRNA"/>
</dbReference>
<dbReference type="EMBL" id="AK144966">
    <property type="protein sequence ID" value="BAE26159.1"/>
    <property type="molecule type" value="mRNA"/>
</dbReference>
<dbReference type="EMBL" id="AK149580">
    <property type="protein sequence ID" value="BAE28972.1"/>
    <property type="molecule type" value="mRNA"/>
</dbReference>
<dbReference type="EMBL" id="BC070455">
    <property type="protein sequence ID" value="AAH70455.1"/>
    <property type="molecule type" value="mRNA"/>
</dbReference>
<dbReference type="CCDS" id="CCDS22088.1"/>
<dbReference type="RefSeq" id="NP_035499.1">
    <property type="nucleotide sequence ID" value="NM_011369.4"/>
</dbReference>
<dbReference type="SMR" id="Q9Z179"/>
<dbReference type="BioGRID" id="203217">
    <property type="interactions" value="18"/>
</dbReference>
<dbReference type="FunCoup" id="Q9Z179">
    <property type="interactions" value="169"/>
</dbReference>
<dbReference type="IntAct" id="Q9Z179">
    <property type="interactions" value="24"/>
</dbReference>
<dbReference type="STRING" id="10090.ENSMUSP00000022945"/>
<dbReference type="iPTMnet" id="Q9Z179"/>
<dbReference type="PhosphoSitePlus" id="Q9Z179"/>
<dbReference type="PaxDb" id="10090-ENSMUSP00000022945"/>
<dbReference type="PeptideAtlas" id="Q9Z179"/>
<dbReference type="ProteomicsDB" id="256998"/>
<dbReference type="Pumba" id="Q9Z179"/>
<dbReference type="Antibodypedia" id="43856">
    <property type="antibodies" value="110 antibodies from 19 providers"/>
</dbReference>
<dbReference type="Ensembl" id="ENSMUST00000022945.9">
    <property type="protein sequence ID" value="ENSMUSP00000022945.8"/>
    <property type="gene ID" value="ENSMUSG00000022322.9"/>
</dbReference>
<dbReference type="GeneID" id="20419"/>
<dbReference type="KEGG" id="mmu:20419"/>
<dbReference type="UCSC" id="uc009kua.1">
    <property type="organism name" value="mouse"/>
</dbReference>
<dbReference type="AGR" id="MGI:1338802"/>
<dbReference type="CTD" id="79801"/>
<dbReference type="MGI" id="MGI:1338802">
    <property type="gene designation" value="Shcbp1"/>
</dbReference>
<dbReference type="VEuPathDB" id="HostDB:ENSMUSG00000022322"/>
<dbReference type="eggNOG" id="ENOG502QUQ2">
    <property type="taxonomic scope" value="Eukaryota"/>
</dbReference>
<dbReference type="GeneTree" id="ENSGT00940000161310"/>
<dbReference type="HOGENOM" id="CLU_022717_2_0_1"/>
<dbReference type="InParanoid" id="Q9Z179"/>
<dbReference type="OMA" id="FLCESQD"/>
<dbReference type="OrthoDB" id="5978115at2759"/>
<dbReference type="PhylomeDB" id="Q9Z179"/>
<dbReference type="TreeFam" id="TF329196"/>
<dbReference type="BioGRID-ORCS" id="20419">
    <property type="hits" value="6 hits in 80 CRISPR screens"/>
</dbReference>
<dbReference type="ChiTaRS" id="Shcbp1">
    <property type="organism name" value="mouse"/>
</dbReference>
<dbReference type="PRO" id="PR:Q9Z179"/>
<dbReference type="Proteomes" id="UP000000589">
    <property type="component" value="Chromosome 8"/>
</dbReference>
<dbReference type="RNAct" id="Q9Z179">
    <property type="molecule type" value="protein"/>
</dbReference>
<dbReference type="Bgee" id="ENSMUSG00000022322">
    <property type="expression patterns" value="Expressed in otic placode and 190 other cell types or tissues"/>
</dbReference>
<dbReference type="ExpressionAtlas" id="Q9Z179">
    <property type="expression patterns" value="baseline and differential"/>
</dbReference>
<dbReference type="GO" id="GO:0005737">
    <property type="term" value="C:cytoplasm"/>
    <property type="evidence" value="ECO:0007669"/>
    <property type="project" value="UniProtKB-KW"/>
</dbReference>
<dbReference type="GO" id="GO:0030496">
    <property type="term" value="C:midbody"/>
    <property type="evidence" value="ECO:0007669"/>
    <property type="project" value="UniProtKB-SubCell"/>
</dbReference>
<dbReference type="GO" id="GO:0005819">
    <property type="term" value="C:spindle"/>
    <property type="evidence" value="ECO:0007669"/>
    <property type="project" value="UniProtKB-SubCell"/>
</dbReference>
<dbReference type="GO" id="GO:0042169">
    <property type="term" value="F:SH2 domain binding"/>
    <property type="evidence" value="ECO:0000314"/>
    <property type="project" value="MGI"/>
</dbReference>
<dbReference type="GO" id="GO:0008543">
    <property type="term" value="P:fibroblast growth factor receptor signaling pathway"/>
    <property type="evidence" value="ECO:0000315"/>
    <property type="project" value="UniProtKB"/>
</dbReference>
<dbReference type="GO" id="GO:2000177">
    <property type="term" value="P:regulation of neural precursor cell proliferation"/>
    <property type="evidence" value="ECO:0000315"/>
    <property type="project" value="UniProtKB"/>
</dbReference>
<dbReference type="FunFam" id="2.160.20.10:FF:000020">
    <property type="entry name" value="SHC SH2 domain-binding protein 1"/>
    <property type="match status" value="1"/>
</dbReference>
<dbReference type="Gene3D" id="2.160.20.10">
    <property type="entry name" value="Single-stranded right-handed beta-helix, Pectin lyase-like"/>
    <property type="match status" value="1"/>
</dbReference>
<dbReference type="InterPro" id="IPR039448">
    <property type="entry name" value="Beta_helix"/>
</dbReference>
<dbReference type="InterPro" id="IPR006626">
    <property type="entry name" value="PbH1"/>
</dbReference>
<dbReference type="InterPro" id="IPR012334">
    <property type="entry name" value="Pectin_lyas_fold"/>
</dbReference>
<dbReference type="InterPro" id="IPR011050">
    <property type="entry name" value="Pectin_lyase_fold/virulence"/>
</dbReference>
<dbReference type="InterPro" id="IPR045140">
    <property type="entry name" value="SHCBP1-like"/>
</dbReference>
<dbReference type="PANTHER" id="PTHR14695:SF8">
    <property type="entry name" value="SHC SH2 DOMAIN-BINDING PROTEIN 1"/>
    <property type="match status" value="1"/>
</dbReference>
<dbReference type="PANTHER" id="PTHR14695">
    <property type="entry name" value="SHC SH2-DOMAIN BINDING PROTEIN 1-RELATED"/>
    <property type="match status" value="1"/>
</dbReference>
<dbReference type="Pfam" id="PF13229">
    <property type="entry name" value="Beta_helix"/>
    <property type="match status" value="1"/>
</dbReference>
<dbReference type="Pfam" id="PF23762">
    <property type="entry name" value="SHCBP_N"/>
    <property type="match status" value="1"/>
</dbReference>
<dbReference type="SMART" id="SM00710">
    <property type="entry name" value="PbH1"/>
    <property type="match status" value="5"/>
</dbReference>
<dbReference type="SUPFAM" id="SSF51126">
    <property type="entry name" value="Pectin lyase-like"/>
    <property type="match status" value="1"/>
</dbReference>
<feature type="initiator methionine" description="Removed" evidence="1">
    <location>
        <position position="1"/>
    </location>
</feature>
<feature type="chain" id="PRO_0000076316" description="SHC SH2 domain-binding protein 1">
    <location>
        <begin position="2"/>
        <end position="668"/>
    </location>
</feature>
<feature type="repeat" description="PbH1 1">
    <location>
        <begin position="428"/>
        <end position="451"/>
    </location>
</feature>
<feature type="repeat" description="PbH1 2">
    <location>
        <begin position="452"/>
        <end position="473"/>
    </location>
</feature>
<feature type="repeat" description="PbH1 3">
    <location>
        <begin position="474"/>
        <end position="496"/>
    </location>
</feature>
<feature type="repeat" description="PbH1 4">
    <location>
        <begin position="497"/>
        <end position="518"/>
    </location>
</feature>
<feature type="repeat" description="PbH1 5">
    <location>
        <begin position="526"/>
        <end position="548"/>
    </location>
</feature>
<feature type="modified residue" description="N-acetylalanine" evidence="1">
    <location>
        <position position="2"/>
    </location>
</feature>
<feature type="modified residue" description="Phosphoserine" evidence="1">
    <location>
        <position position="31"/>
    </location>
</feature>
<feature type="modified residue" description="Phosphoserine" evidence="1">
    <location>
        <position position="44"/>
    </location>
</feature>
<feature type="modified residue" description="Phosphoserine" evidence="1">
    <location>
        <position position="273"/>
    </location>
</feature>
<feature type="modified residue" description="Phosphoserine" evidence="1">
    <location>
        <position position="630"/>
    </location>
</feature>
<feature type="sequence conflict" description="In Ref. 2; BAE26159." evidence="4" ref="2">
    <original>G</original>
    <variation>D</variation>
    <location>
        <position position="53"/>
    </location>
</feature>
<keyword id="KW-0007">Acetylation</keyword>
<keyword id="KW-0963">Cytoplasm</keyword>
<keyword id="KW-0206">Cytoskeleton</keyword>
<keyword id="KW-0597">Phosphoprotein</keyword>
<keyword id="KW-1185">Reference proteome</keyword>
<keyword id="KW-0677">Repeat</keyword>
<reference key="1">
    <citation type="journal article" date="1999" name="Oncogene">
        <title>Cloning and characterization of mPAL, a novel Shc SH2 domain-binding protein expressed in proliferating cells.</title>
        <authorList>
            <person name="Schmandt R."/>
            <person name="Liu S.K."/>
            <person name="McGlade C.J."/>
        </authorList>
    </citation>
    <scope>NUCLEOTIDE SEQUENCE [MRNA]</scope>
    <scope>FUNCTION</scope>
    <scope>INDUCTION</scope>
    <scope>TISSUE SPECIFICITY</scope>
    <scope>INTERACTION WITH SHC1</scope>
</reference>
<reference key="2">
    <citation type="journal article" date="2005" name="Science">
        <title>The transcriptional landscape of the mammalian genome.</title>
        <authorList>
            <person name="Carninci P."/>
            <person name="Kasukawa T."/>
            <person name="Katayama S."/>
            <person name="Gough J."/>
            <person name="Frith M.C."/>
            <person name="Maeda N."/>
            <person name="Oyama R."/>
            <person name="Ravasi T."/>
            <person name="Lenhard B."/>
            <person name="Wells C."/>
            <person name="Kodzius R."/>
            <person name="Shimokawa K."/>
            <person name="Bajic V.B."/>
            <person name="Brenner S.E."/>
            <person name="Batalov S."/>
            <person name="Forrest A.R."/>
            <person name="Zavolan M."/>
            <person name="Davis M.J."/>
            <person name="Wilming L.G."/>
            <person name="Aidinis V."/>
            <person name="Allen J.E."/>
            <person name="Ambesi-Impiombato A."/>
            <person name="Apweiler R."/>
            <person name="Aturaliya R.N."/>
            <person name="Bailey T.L."/>
            <person name="Bansal M."/>
            <person name="Baxter L."/>
            <person name="Beisel K.W."/>
            <person name="Bersano T."/>
            <person name="Bono H."/>
            <person name="Chalk A.M."/>
            <person name="Chiu K.P."/>
            <person name="Choudhary V."/>
            <person name="Christoffels A."/>
            <person name="Clutterbuck D.R."/>
            <person name="Crowe M.L."/>
            <person name="Dalla E."/>
            <person name="Dalrymple B.P."/>
            <person name="de Bono B."/>
            <person name="Della Gatta G."/>
            <person name="di Bernardo D."/>
            <person name="Down T."/>
            <person name="Engstrom P."/>
            <person name="Fagiolini M."/>
            <person name="Faulkner G."/>
            <person name="Fletcher C.F."/>
            <person name="Fukushima T."/>
            <person name="Furuno M."/>
            <person name="Futaki S."/>
            <person name="Gariboldi M."/>
            <person name="Georgii-Hemming P."/>
            <person name="Gingeras T.R."/>
            <person name="Gojobori T."/>
            <person name="Green R.E."/>
            <person name="Gustincich S."/>
            <person name="Harbers M."/>
            <person name="Hayashi Y."/>
            <person name="Hensch T.K."/>
            <person name="Hirokawa N."/>
            <person name="Hill D."/>
            <person name="Huminiecki L."/>
            <person name="Iacono M."/>
            <person name="Ikeo K."/>
            <person name="Iwama A."/>
            <person name="Ishikawa T."/>
            <person name="Jakt M."/>
            <person name="Kanapin A."/>
            <person name="Katoh M."/>
            <person name="Kawasawa Y."/>
            <person name="Kelso J."/>
            <person name="Kitamura H."/>
            <person name="Kitano H."/>
            <person name="Kollias G."/>
            <person name="Krishnan S.P."/>
            <person name="Kruger A."/>
            <person name="Kummerfeld S.K."/>
            <person name="Kurochkin I.V."/>
            <person name="Lareau L.F."/>
            <person name="Lazarevic D."/>
            <person name="Lipovich L."/>
            <person name="Liu J."/>
            <person name="Liuni S."/>
            <person name="McWilliam S."/>
            <person name="Madan Babu M."/>
            <person name="Madera M."/>
            <person name="Marchionni L."/>
            <person name="Matsuda H."/>
            <person name="Matsuzawa S."/>
            <person name="Miki H."/>
            <person name="Mignone F."/>
            <person name="Miyake S."/>
            <person name="Morris K."/>
            <person name="Mottagui-Tabar S."/>
            <person name="Mulder N."/>
            <person name="Nakano N."/>
            <person name="Nakauchi H."/>
            <person name="Ng P."/>
            <person name="Nilsson R."/>
            <person name="Nishiguchi S."/>
            <person name="Nishikawa S."/>
            <person name="Nori F."/>
            <person name="Ohara O."/>
            <person name="Okazaki Y."/>
            <person name="Orlando V."/>
            <person name="Pang K.C."/>
            <person name="Pavan W.J."/>
            <person name="Pavesi G."/>
            <person name="Pesole G."/>
            <person name="Petrovsky N."/>
            <person name="Piazza S."/>
            <person name="Reed J."/>
            <person name="Reid J.F."/>
            <person name="Ring B.Z."/>
            <person name="Ringwald M."/>
            <person name="Rost B."/>
            <person name="Ruan Y."/>
            <person name="Salzberg S.L."/>
            <person name="Sandelin A."/>
            <person name="Schneider C."/>
            <person name="Schoenbach C."/>
            <person name="Sekiguchi K."/>
            <person name="Semple C.A."/>
            <person name="Seno S."/>
            <person name="Sessa L."/>
            <person name="Sheng Y."/>
            <person name="Shibata Y."/>
            <person name="Shimada H."/>
            <person name="Shimada K."/>
            <person name="Silva D."/>
            <person name="Sinclair B."/>
            <person name="Sperling S."/>
            <person name="Stupka E."/>
            <person name="Sugiura K."/>
            <person name="Sultana R."/>
            <person name="Takenaka Y."/>
            <person name="Taki K."/>
            <person name="Tammoja K."/>
            <person name="Tan S.L."/>
            <person name="Tang S."/>
            <person name="Taylor M.S."/>
            <person name="Tegner J."/>
            <person name="Teichmann S.A."/>
            <person name="Ueda H.R."/>
            <person name="van Nimwegen E."/>
            <person name="Verardo R."/>
            <person name="Wei C.L."/>
            <person name="Yagi K."/>
            <person name="Yamanishi H."/>
            <person name="Zabarovsky E."/>
            <person name="Zhu S."/>
            <person name="Zimmer A."/>
            <person name="Hide W."/>
            <person name="Bult C."/>
            <person name="Grimmond S.M."/>
            <person name="Teasdale R.D."/>
            <person name="Liu E.T."/>
            <person name="Brusic V."/>
            <person name="Quackenbush J."/>
            <person name="Wahlestedt C."/>
            <person name="Mattick J.S."/>
            <person name="Hume D.A."/>
            <person name="Kai C."/>
            <person name="Sasaki D."/>
            <person name="Tomaru Y."/>
            <person name="Fukuda S."/>
            <person name="Kanamori-Katayama M."/>
            <person name="Suzuki M."/>
            <person name="Aoki J."/>
            <person name="Arakawa T."/>
            <person name="Iida J."/>
            <person name="Imamura K."/>
            <person name="Itoh M."/>
            <person name="Kato T."/>
            <person name="Kawaji H."/>
            <person name="Kawagashira N."/>
            <person name="Kawashima T."/>
            <person name="Kojima M."/>
            <person name="Kondo S."/>
            <person name="Konno H."/>
            <person name="Nakano K."/>
            <person name="Ninomiya N."/>
            <person name="Nishio T."/>
            <person name="Okada M."/>
            <person name="Plessy C."/>
            <person name="Shibata K."/>
            <person name="Shiraki T."/>
            <person name="Suzuki S."/>
            <person name="Tagami M."/>
            <person name="Waki K."/>
            <person name="Watahiki A."/>
            <person name="Okamura-Oho Y."/>
            <person name="Suzuki H."/>
            <person name="Kawai J."/>
            <person name="Hayashizaki Y."/>
        </authorList>
    </citation>
    <scope>NUCLEOTIDE SEQUENCE [LARGE SCALE MRNA]</scope>
    <source>
        <tissue>Liver</tissue>
        <tissue>Mammary gland</tissue>
    </source>
</reference>
<reference key="3">
    <citation type="journal article" date="2004" name="Genome Res.">
        <title>The status, quality, and expansion of the NIH full-length cDNA project: the Mammalian Gene Collection (MGC).</title>
        <authorList>
            <consortium name="The MGC Project Team"/>
        </authorList>
    </citation>
    <scope>NUCLEOTIDE SEQUENCE [LARGE SCALE MRNA]</scope>
    <source>
        <strain>C57BL/6J</strain>
        <tissue>Eye</tissue>
    </source>
</reference>
<reference key="4">
    <citation type="journal article" date="2010" name="Cell">
        <title>A tissue-specific atlas of mouse protein phosphorylation and expression.</title>
        <authorList>
            <person name="Huttlin E.L."/>
            <person name="Jedrychowski M.P."/>
            <person name="Elias J.E."/>
            <person name="Goswami T."/>
            <person name="Rad R."/>
            <person name="Beausoleil S.A."/>
            <person name="Villen J."/>
            <person name="Haas W."/>
            <person name="Sowa M.E."/>
            <person name="Gygi S.P."/>
        </authorList>
    </citation>
    <scope>IDENTIFICATION BY MASS SPECTROMETRY [LARGE SCALE ANALYSIS]</scope>
    <source>
        <tissue>Spleen</tissue>
    </source>
</reference>
<reference key="5">
    <citation type="journal article" date="2012" name="Genes Dev.">
        <title>The ubiquitin ligase mLin41 temporally promotes neural progenitor cell maintenance through FGF signaling.</title>
        <authorList>
            <person name="Chen J."/>
            <person name="Lai F."/>
            <person name="Niswander L."/>
        </authorList>
    </citation>
    <scope>FUNCTION</scope>
    <scope>INTERACTION WITH TRIM71</scope>
</reference>